<comment type="similarity">
    <text evidence="1">Belongs to the PDCD5 family.</text>
</comment>
<organism>
    <name type="scientific">Methanocorpusculum labreanum (strain ATCC 43576 / DSM 4855 / Z)</name>
    <dbReference type="NCBI Taxonomy" id="410358"/>
    <lineage>
        <taxon>Archaea</taxon>
        <taxon>Methanobacteriati</taxon>
        <taxon>Methanobacteriota</taxon>
        <taxon>Stenosarchaea group</taxon>
        <taxon>Methanomicrobia</taxon>
        <taxon>Methanomicrobiales</taxon>
        <taxon>Methanocorpusculaceae</taxon>
        <taxon>Methanocorpusculum</taxon>
    </lineage>
</organism>
<reference key="1">
    <citation type="journal article" date="2009" name="Stand. Genomic Sci.">
        <title>Complete genome sequence of Methanocorpusculum labreanum type strain Z.</title>
        <authorList>
            <person name="Anderson I.J."/>
            <person name="Sieprawska-Lupa M."/>
            <person name="Goltsman E."/>
            <person name="Lapidus A."/>
            <person name="Copeland A."/>
            <person name="Glavina Del Rio T."/>
            <person name="Tice H."/>
            <person name="Dalin E."/>
            <person name="Barry K."/>
            <person name="Pitluck S."/>
            <person name="Hauser L."/>
            <person name="Land M."/>
            <person name="Lucas S."/>
            <person name="Richardson P."/>
            <person name="Whitman W.B."/>
            <person name="Kyrpides N.C."/>
        </authorList>
    </citation>
    <scope>NUCLEOTIDE SEQUENCE [LARGE SCALE GENOMIC DNA]</scope>
    <source>
        <strain>ATCC 43576 / DSM 4855 / Z</strain>
    </source>
</reference>
<evidence type="ECO:0000255" key="1">
    <source>
        <dbReference type="HAMAP-Rule" id="MF_00026"/>
    </source>
</evidence>
<dbReference type="EMBL" id="CP000559">
    <property type="protein sequence ID" value="ABN07647.1"/>
    <property type="molecule type" value="Genomic_DNA"/>
</dbReference>
<dbReference type="RefSeq" id="WP_011833850.1">
    <property type="nucleotide sequence ID" value="NC_008942.1"/>
</dbReference>
<dbReference type="SMR" id="A2STJ1"/>
<dbReference type="STRING" id="410358.Mlab_1482"/>
<dbReference type="GeneID" id="4795507"/>
<dbReference type="KEGG" id="mla:Mlab_1482"/>
<dbReference type="eggNOG" id="arCOG04179">
    <property type="taxonomic scope" value="Archaea"/>
</dbReference>
<dbReference type="HOGENOM" id="CLU_122978_3_0_2"/>
<dbReference type="OrthoDB" id="7912at2157"/>
<dbReference type="Proteomes" id="UP000000365">
    <property type="component" value="Chromosome"/>
</dbReference>
<dbReference type="GO" id="GO:0005829">
    <property type="term" value="C:cytosol"/>
    <property type="evidence" value="ECO:0007669"/>
    <property type="project" value="TreeGrafter"/>
</dbReference>
<dbReference type="GO" id="GO:0003677">
    <property type="term" value="F:DNA binding"/>
    <property type="evidence" value="ECO:0007669"/>
    <property type="project" value="UniProtKB-UniRule"/>
</dbReference>
<dbReference type="Gene3D" id="1.10.8.140">
    <property type="entry name" value="PDCD5-like"/>
    <property type="match status" value="1"/>
</dbReference>
<dbReference type="HAMAP" id="MF_00026">
    <property type="entry name" value="dsDNA_bind"/>
    <property type="match status" value="1"/>
</dbReference>
<dbReference type="InterPro" id="IPR022889">
    <property type="entry name" value="DNA_bind_arc"/>
</dbReference>
<dbReference type="InterPro" id="IPR002836">
    <property type="entry name" value="PDCD5-like"/>
</dbReference>
<dbReference type="InterPro" id="IPR036883">
    <property type="entry name" value="PDCD5-like_sf"/>
</dbReference>
<dbReference type="NCBIfam" id="NF003268">
    <property type="entry name" value="PRK04239.1"/>
    <property type="match status" value="1"/>
</dbReference>
<dbReference type="PANTHER" id="PTHR10840">
    <property type="entry name" value="PROGRAMMED CELL DEATH PROTEIN 5"/>
    <property type="match status" value="1"/>
</dbReference>
<dbReference type="PANTHER" id="PTHR10840:SF0">
    <property type="entry name" value="PROGRAMMED CELL DEATH PROTEIN 5"/>
    <property type="match status" value="1"/>
</dbReference>
<dbReference type="Pfam" id="PF01984">
    <property type="entry name" value="dsDNA_bind"/>
    <property type="match status" value="1"/>
</dbReference>
<dbReference type="PIRSF" id="PIRSF015730">
    <property type="entry name" value="TFAR19"/>
    <property type="match status" value="1"/>
</dbReference>
<dbReference type="SUPFAM" id="SSF46950">
    <property type="entry name" value="Double-stranded DNA-binding domain"/>
    <property type="match status" value="1"/>
</dbReference>
<proteinExistence type="inferred from homology"/>
<sequence length="110" mass="13035">MGDDELAEIRRQRMMQMQQQQMAEQDQIQRQQQMQAQIQSVLMQVMEPEARERLNTIRLTKPEFAASVEQQIVSLAQSGRLRQKITDEQLRQLLTQIVPQKKEFNIRRVG</sequence>
<accession>A2STJ1</accession>
<gene>
    <name type="ordered locus">Mlab_1482</name>
</gene>
<protein>
    <recommendedName>
        <fullName evidence="1">DNA-binding protein Mlab_1482</fullName>
    </recommendedName>
</protein>
<keyword id="KW-0238">DNA-binding</keyword>
<keyword id="KW-1185">Reference proteome</keyword>
<feature type="chain" id="PRO_1000002197" description="DNA-binding protein Mlab_1482">
    <location>
        <begin position="1"/>
        <end position="110"/>
    </location>
</feature>
<name>Y1482_METLZ</name>